<comment type="function">
    <text evidence="1">Catalyzes the reversible phosphorylation of UMP to UDP.</text>
</comment>
<comment type="catalytic activity">
    <reaction evidence="1">
        <text>UMP + ATP = UDP + ADP</text>
        <dbReference type="Rhea" id="RHEA:24400"/>
        <dbReference type="ChEBI" id="CHEBI:30616"/>
        <dbReference type="ChEBI" id="CHEBI:57865"/>
        <dbReference type="ChEBI" id="CHEBI:58223"/>
        <dbReference type="ChEBI" id="CHEBI:456216"/>
        <dbReference type="EC" id="2.7.4.22"/>
    </reaction>
</comment>
<comment type="activity regulation">
    <text evidence="1">Allosterically activated by GTP. Inhibited by UTP.</text>
</comment>
<comment type="pathway">
    <text evidence="1">Pyrimidine metabolism; CTP biosynthesis via de novo pathway; UDP from UMP (UMPK route): step 1/1.</text>
</comment>
<comment type="subunit">
    <text evidence="1">Homohexamer.</text>
</comment>
<comment type="subcellular location">
    <subcellularLocation>
        <location evidence="1">Cytoplasm</location>
    </subcellularLocation>
</comment>
<comment type="similarity">
    <text evidence="1">Belongs to the UMP kinase family.</text>
</comment>
<feature type="chain" id="PRO_0000323960" description="Uridylate kinase">
    <location>
        <begin position="1"/>
        <end position="252"/>
    </location>
</feature>
<feature type="region of interest" description="Involved in allosteric activation by GTP" evidence="1">
    <location>
        <begin position="28"/>
        <end position="33"/>
    </location>
</feature>
<feature type="binding site" evidence="1">
    <location>
        <begin position="20"/>
        <end position="23"/>
    </location>
    <ligand>
        <name>ATP</name>
        <dbReference type="ChEBI" id="CHEBI:30616"/>
    </ligand>
</feature>
<feature type="binding site" evidence="1">
    <location>
        <position position="62"/>
    </location>
    <ligand>
        <name>UMP</name>
        <dbReference type="ChEBI" id="CHEBI:57865"/>
    </ligand>
</feature>
<feature type="binding site" evidence="1">
    <location>
        <position position="63"/>
    </location>
    <ligand>
        <name>ATP</name>
        <dbReference type="ChEBI" id="CHEBI:30616"/>
    </ligand>
</feature>
<feature type="binding site" evidence="1">
    <location>
        <position position="67"/>
    </location>
    <ligand>
        <name>ATP</name>
        <dbReference type="ChEBI" id="CHEBI:30616"/>
    </ligand>
</feature>
<feature type="binding site" evidence="1">
    <location>
        <position position="82"/>
    </location>
    <ligand>
        <name>UMP</name>
        <dbReference type="ChEBI" id="CHEBI:57865"/>
    </ligand>
</feature>
<feature type="binding site" evidence="1">
    <location>
        <begin position="143"/>
        <end position="150"/>
    </location>
    <ligand>
        <name>UMP</name>
        <dbReference type="ChEBI" id="CHEBI:57865"/>
    </ligand>
</feature>
<feature type="binding site" evidence="1">
    <location>
        <position position="171"/>
    </location>
    <ligand>
        <name>ATP</name>
        <dbReference type="ChEBI" id="CHEBI:30616"/>
    </ligand>
</feature>
<feature type="binding site" evidence="1">
    <location>
        <position position="177"/>
    </location>
    <ligand>
        <name>ATP</name>
        <dbReference type="ChEBI" id="CHEBI:30616"/>
    </ligand>
</feature>
<feature type="binding site" evidence="1">
    <location>
        <position position="180"/>
    </location>
    <ligand>
        <name>ATP</name>
        <dbReference type="ChEBI" id="CHEBI:30616"/>
    </ligand>
</feature>
<proteinExistence type="inferred from homology"/>
<sequence>MTTKADKSDDGKVRGRYLLKLSGEAFSGGGGLGVDPDVVHAIAREIAAVVRDGSEIAVVIGGGNFFRGAELQQRGMDRARSDYMGMLGTVMNCLALQDFLEKEGIDSRVQTAITMGQVAEPYIPLRAVRHLEKGRVVIFGAGMGMPYFSTDTTAAQRALEIDAEALLMGKNGVDGVYDSDPKTNPEAVKFDSLSYGEVITRDLKVADMTAITLCRDNKLPILVFELLAEGNIARAVKGEKIGTLVGDQGSRD</sequence>
<protein>
    <recommendedName>
        <fullName evidence="1">Uridylate kinase</fullName>
        <shortName evidence="1">UK</shortName>
        <ecNumber evidence="1">2.7.4.22</ecNumber>
    </recommendedName>
    <alternativeName>
        <fullName evidence="1">Uridine monophosphate kinase</fullName>
        <shortName evidence="1">UMP kinase</shortName>
        <shortName evidence="1">UMPK</shortName>
    </alternativeName>
</protein>
<gene>
    <name evidence="1" type="primary">pyrH</name>
    <name type="ordered locus">SAV_2625</name>
</gene>
<evidence type="ECO:0000255" key="1">
    <source>
        <dbReference type="HAMAP-Rule" id="MF_01220"/>
    </source>
</evidence>
<name>PYRH_STRAW</name>
<accession>Q82JX9</accession>
<keyword id="KW-0021">Allosteric enzyme</keyword>
<keyword id="KW-0067">ATP-binding</keyword>
<keyword id="KW-0963">Cytoplasm</keyword>
<keyword id="KW-0418">Kinase</keyword>
<keyword id="KW-0547">Nucleotide-binding</keyword>
<keyword id="KW-0665">Pyrimidine biosynthesis</keyword>
<keyword id="KW-1185">Reference proteome</keyword>
<keyword id="KW-0808">Transferase</keyword>
<reference key="1">
    <citation type="journal article" date="2003" name="Nat. Biotechnol.">
        <title>Complete genome sequence and comparative analysis of the industrial microorganism Streptomyces avermitilis.</title>
        <authorList>
            <person name="Ikeda H."/>
            <person name="Ishikawa J."/>
            <person name="Hanamoto A."/>
            <person name="Shinose M."/>
            <person name="Kikuchi H."/>
            <person name="Shiba T."/>
            <person name="Sakaki Y."/>
            <person name="Hattori M."/>
            <person name="Omura S."/>
        </authorList>
    </citation>
    <scope>NUCLEOTIDE SEQUENCE [LARGE SCALE GENOMIC DNA]</scope>
    <source>
        <strain>ATCC 31267 / DSM 46492 / JCM 5070 / NBRC 14893 / NCIMB 12804 / NRRL 8165 / MA-4680</strain>
    </source>
</reference>
<reference key="2">
    <citation type="journal article" date="2001" name="Proc. Natl. Acad. Sci. U.S.A.">
        <title>Genome sequence of an industrial microorganism Streptomyces avermitilis: deducing the ability of producing secondary metabolites.</title>
        <authorList>
            <person name="Omura S."/>
            <person name="Ikeda H."/>
            <person name="Ishikawa J."/>
            <person name="Hanamoto A."/>
            <person name="Takahashi C."/>
            <person name="Shinose M."/>
            <person name="Takahashi Y."/>
            <person name="Horikawa H."/>
            <person name="Nakazawa H."/>
            <person name="Osonoe T."/>
            <person name="Kikuchi H."/>
            <person name="Shiba T."/>
            <person name="Sakaki Y."/>
            <person name="Hattori M."/>
        </authorList>
    </citation>
    <scope>NUCLEOTIDE SEQUENCE [LARGE SCALE GENOMIC DNA]</scope>
    <source>
        <strain>ATCC 31267 / DSM 46492 / JCM 5070 / NBRC 14893 / NCIMB 12804 / NRRL 8165 / MA-4680</strain>
    </source>
</reference>
<organism>
    <name type="scientific">Streptomyces avermitilis (strain ATCC 31267 / DSM 46492 / JCM 5070 / NBRC 14893 / NCIMB 12804 / NRRL 8165 / MA-4680)</name>
    <dbReference type="NCBI Taxonomy" id="227882"/>
    <lineage>
        <taxon>Bacteria</taxon>
        <taxon>Bacillati</taxon>
        <taxon>Actinomycetota</taxon>
        <taxon>Actinomycetes</taxon>
        <taxon>Kitasatosporales</taxon>
        <taxon>Streptomycetaceae</taxon>
        <taxon>Streptomyces</taxon>
    </lineage>
</organism>
<dbReference type="EC" id="2.7.4.22" evidence="1"/>
<dbReference type="EMBL" id="BA000030">
    <property type="protein sequence ID" value="BAC70336.1"/>
    <property type="molecule type" value="Genomic_DNA"/>
</dbReference>
<dbReference type="RefSeq" id="WP_010984061.1">
    <property type="nucleotide sequence ID" value="NZ_JZJK01000071.1"/>
</dbReference>
<dbReference type="SMR" id="Q82JX9"/>
<dbReference type="GeneID" id="41539707"/>
<dbReference type="KEGG" id="sma:SAVERM_2625"/>
<dbReference type="eggNOG" id="COG0528">
    <property type="taxonomic scope" value="Bacteria"/>
</dbReference>
<dbReference type="HOGENOM" id="CLU_033861_0_0_11"/>
<dbReference type="OrthoDB" id="9807458at2"/>
<dbReference type="UniPathway" id="UPA00159">
    <property type="reaction ID" value="UER00275"/>
</dbReference>
<dbReference type="Proteomes" id="UP000000428">
    <property type="component" value="Chromosome"/>
</dbReference>
<dbReference type="GO" id="GO:0005737">
    <property type="term" value="C:cytoplasm"/>
    <property type="evidence" value="ECO:0007669"/>
    <property type="project" value="UniProtKB-SubCell"/>
</dbReference>
<dbReference type="GO" id="GO:0005524">
    <property type="term" value="F:ATP binding"/>
    <property type="evidence" value="ECO:0007669"/>
    <property type="project" value="UniProtKB-KW"/>
</dbReference>
<dbReference type="GO" id="GO:0033862">
    <property type="term" value="F:UMP kinase activity"/>
    <property type="evidence" value="ECO:0007669"/>
    <property type="project" value="UniProtKB-EC"/>
</dbReference>
<dbReference type="GO" id="GO:0044210">
    <property type="term" value="P:'de novo' CTP biosynthetic process"/>
    <property type="evidence" value="ECO:0007669"/>
    <property type="project" value="UniProtKB-UniRule"/>
</dbReference>
<dbReference type="GO" id="GO:0006225">
    <property type="term" value="P:UDP biosynthetic process"/>
    <property type="evidence" value="ECO:0007669"/>
    <property type="project" value="TreeGrafter"/>
</dbReference>
<dbReference type="CDD" id="cd04254">
    <property type="entry name" value="AAK_UMPK-PyrH-Ec"/>
    <property type="match status" value="1"/>
</dbReference>
<dbReference type="FunFam" id="3.40.1160.10:FF:000001">
    <property type="entry name" value="Uridylate kinase"/>
    <property type="match status" value="1"/>
</dbReference>
<dbReference type="Gene3D" id="3.40.1160.10">
    <property type="entry name" value="Acetylglutamate kinase-like"/>
    <property type="match status" value="1"/>
</dbReference>
<dbReference type="HAMAP" id="MF_01220_B">
    <property type="entry name" value="PyrH_B"/>
    <property type="match status" value="1"/>
</dbReference>
<dbReference type="InterPro" id="IPR036393">
    <property type="entry name" value="AceGlu_kinase-like_sf"/>
</dbReference>
<dbReference type="InterPro" id="IPR001048">
    <property type="entry name" value="Asp/Glu/Uridylate_kinase"/>
</dbReference>
<dbReference type="InterPro" id="IPR011817">
    <property type="entry name" value="Uridylate_kinase"/>
</dbReference>
<dbReference type="InterPro" id="IPR015963">
    <property type="entry name" value="Uridylate_kinase_bac"/>
</dbReference>
<dbReference type="NCBIfam" id="TIGR02075">
    <property type="entry name" value="pyrH_bact"/>
    <property type="match status" value="1"/>
</dbReference>
<dbReference type="PANTHER" id="PTHR42833">
    <property type="entry name" value="URIDYLATE KINASE"/>
    <property type="match status" value="1"/>
</dbReference>
<dbReference type="PANTHER" id="PTHR42833:SF4">
    <property type="entry name" value="URIDYLATE KINASE PUMPKIN, CHLOROPLASTIC"/>
    <property type="match status" value="1"/>
</dbReference>
<dbReference type="Pfam" id="PF00696">
    <property type="entry name" value="AA_kinase"/>
    <property type="match status" value="1"/>
</dbReference>
<dbReference type="PIRSF" id="PIRSF005650">
    <property type="entry name" value="Uridylate_kin"/>
    <property type="match status" value="1"/>
</dbReference>
<dbReference type="SUPFAM" id="SSF53633">
    <property type="entry name" value="Carbamate kinase-like"/>
    <property type="match status" value="1"/>
</dbReference>